<dbReference type="EMBL" id="CP000438">
    <property type="protein sequence ID" value="ABJ09924.1"/>
    <property type="molecule type" value="Genomic_DNA"/>
</dbReference>
<dbReference type="RefSeq" id="WP_003085569.1">
    <property type="nucleotide sequence ID" value="NZ_CP034244.1"/>
</dbReference>
<dbReference type="SMR" id="Q02HS4"/>
<dbReference type="KEGG" id="pau:PA14_54300"/>
<dbReference type="PseudoCAP" id="PA14_54300"/>
<dbReference type="HOGENOM" id="CLU_066645_1_0_6"/>
<dbReference type="BioCyc" id="PAER208963:G1G74-4572-MONOMER"/>
<dbReference type="Proteomes" id="UP000000653">
    <property type="component" value="Chromosome"/>
</dbReference>
<dbReference type="GO" id="GO:0043590">
    <property type="term" value="C:bacterial nucleoid"/>
    <property type="evidence" value="ECO:0007669"/>
    <property type="project" value="TreeGrafter"/>
</dbReference>
<dbReference type="GO" id="GO:0006310">
    <property type="term" value="P:DNA recombination"/>
    <property type="evidence" value="ECO:0007669"/>
    <property type="project" value="UniProtKB-UniRule"/>
</dbReference>
<dbReference type="GO" id="GO:0006302">
    <property type="term" value="P:double-strand break repair"/>
    <property type="evidence" value="ECO:0007669"/>
    <property type="project" value="TreeGrafter"/>
</dbReference>
<dbReference type="Gene3D" id="2.40.50.140">
    <property type="entry name" value="Nucleic acid-binding proteins"/>
    <property type="match status" value="1"/>
</dbReference>
<dbReference type="Gene3D" id="1.20.1440.120">
    <property type="entry name" value="Recombination protein O, C-terminal domain"/>
    <property type="match status" value="1"/>
</dbReference>
<dbReference type="HAMAP" id="MF_00201">
    <property type="entry name" value="RecO"/>
    <property type="match status" value="1"/>
</dbReference>
<dbReference type="InterPro" id="IPR037278">
    <property type="entry name" value="ARFGAP/RecO"/>
</dbReference>
<dbReference type="InterPro" id="IPR022572">
    <property type="entry name" value="DNA_rep/recomb_RecO_N"/>
</dbReference>
<dbReference type="InterPro" id="IPR012340">
    <property type="entry name" value="NA-bd_OB-fold"/>
</dbReference>
<dbReference type="InterPro" id="IPR003717">
    <property type="entry name" value="RecO"/>
</dbReference>
<dbReference type="InterPro" id="IPR042242">
    <property type="entry name" value="RecO_C"/>
</dbReference>
<dbReference type="NCBIfam" id="TIGR00613">
    <property type="entry name" value="reco"/>
    <property type="match status" value="1"/>
</dbReference>
<dbReference type="PANTHER" id="PTHR33991">
    <property type="entry name" value="DNA REPAIR PROTEIN RECO"/>
    <property type="match status" value="1"/>
</dbReference>
<dbReference type="PANTHER" id="PTHR33991:SF1">
    <property type="entry name" value="DNA REPAIR PROTEIN RECO"/>
    <property type="match status" value="1"/>
</dbReference>
<dbReference type="Pfam" id="PF02565">
    <property type="entry name" value="RecO_C"/>
    <property type="match status" value="1"/>
</dbReference>
<dbReference type="Pfam" id="PF11967">
    <property type="entry name" value="RecO_N"/>
    <property type="match status" value="1"/>
</dbReference>
<dbReference type="SUPFAM" id="SSF57863">
    <property type="entry name" value="ArfGap/RecO-like zinc finger"/>
    <property type="match status" value="1"/>
</dbReference>
<dbReference type="SUPFAM" id="SSF50249">
    <property type="entry name" value="Nucleic acid-binding proteins"/>
    <property type="match status" value="1"/>
</dbReference>
<feature type="chain" id="PRO_1000012148" description="DNA repair protein RecO">
    <location>
        <begin position="1"/>
        <end position="233"/>
    </location>
</feature>
<name>RECO_PSEAB</name>
<comment type="function">
    <text evidence="1">Involved in DNA repair and RecF pathway recombination.</text>
</comment>
<comment type="similarity">
    <text evidence="1">Belongs to the RecO family.</text>
</comment>
<gene>
    <name evidence="1" type="primary">recO</name>
    <name type="ordered locus">PA14_54300</name>
</gene>
<organism>
    <name type="scientific">Pseudomonas aeruginosa (strain UCBPP-PA14)</name>
    <dbReference type="NCBI Taxonomy" id="208963"/>
    <lineage>
        <taxon>Bacteria</taxon>
        <taxon>Pseudomonadati</taxon>
        <taxon>Pseudomonadota</taxon>
        <taxon>Gammaproteobacteria</taxon>
        <taxon>Pseudomonadales</taxon>
        <taxon>Pseudomonadaceae</taxon>
        <taxon>Pseudomonas</taxon>
    </lineage>
</organism>
<evidence type="ECO:0000255" key="1">
    <source>
        <dbReference type="HAMAP-Rule" id="MF_00201"/>
    </source>
</evidence>
<reference key="1">
    <citation type="journal article" date="2006" name="Genome Biol.">
        <title>Genomic analysis reveals that Pseudomonas aeruginosa virulence is combinatorial.</title>
        <authorList>
            <person name="Lee D.G."/>
            <person name="Urbach J.M."/>
            <person name="Wu G."/>
            <person name="Liberati N.T."/>
            <person name="Feinbaum R.L."/>
            <person name="Miyata S."/>
            <person name="Diggins L.T."/>
            <person name="He J."/>
            <person name="Saucier M."/>
            <person name="Deziel E."/>
            <person name="Friedman L."/>
            <person name="Li L."/>
            <person name="Grills G."/>
            <person name="Montgomery K."/>
            <person name="Kucherlapati R."/>
            <person name="Rahme L.G."/>
            <person name="Ausubel F.M."/>
        </authorList>
    </citation>
    <scope>NUCLEOTIDE SEQUENCE [LARGE SCALE GENOMIC DNA]</scope>
    <source>
        <strain>UCBPP-PA14</strain>
    </source>
</reference>
<protein>
    <recommendedName>
        <fullName evidence="1">DNA repair protein RecO</fullName>
    </recommendedName>
    <alternativeName>
        <fullName evidence="1">Recombination protein O</fullName>
    </alternativeName>
</protein>
<proteinExistence type="inferred from homology"/>
<sequence length="233" mass="25513">MSFAAAQATYVLHSRPYKETSALVDFFTPLGRLRAVLRGARGKAGALARPFVPLEAEWRGRGELKTVARLESAGIPNLLNGQALFSGLYLNELLIRLLPAEDPQPEIFAHYAATLPLLAAGRPIEPLLRAFEWRLLEQLGYGFALDVDIDGRPIEPQALYQLLPEAGLEPVAQLQPGLFQGSELLSMADADWSAPGALAAAKRLMRQALAPHLGGRPLVSRELFMNRKESPRD</sequence>
<accession>Q02HS4</accession>
<keyword id="KW-0227">DNA damage</keyword>
<keyword id="KW-0233">DNA recombination</keyword>
<keyword id="KW-0234">DNA repair</keyword>